<gene>
    <name evidence="6" type="primary">A654L</name>
</gene>
<reference key="1">
    <citation type="journal article" date="1997" name="Virology">
        <title>Analysis of 74 kb of DNA located at the right end of the 330-kb chlorella virus PBCV-1 genome.</title>
        <authorList>
            <person name="Li Y."/>
            <person name="Lu Z."/>
            <person name="Sun L."/>
            <person name="Ropp S."/>
            <person name="Kutish G.F."/>
            <person name="Rock D.L."/>
            <person name="van Etten J.L."/>
        </authorList>
    </citation>
    <scope>NUCLEOTIDE SEQUENCE [GENOMIC DNA]</scope>
</reference>
<reference evidence="7" key="2">
    <citation type="journal article" date="2012" name="J. Biol. Chem.">
        <title>Paramecium bursaria chlorella virus 1 encodes a polyamine acetyltransferase.</title>
        <authorList>
            <person name="Charlop-Powers Z."/>
            <person name="Jakoncic J."/>
            <person name="Gurnon J.R."/>
            <person name="Van Etten J.L."/>
            <person name="Zhou M.M."/>
        </authorList>
    </citation>
    <scope>X-RAY CRYSTALLOGRAPHY (1.50 ANGSTROMS) IN COMPLEX WITH COENZYME A</scope>
    <scope>ACTIVE SITE</scope>
    <scope>MUTAGENESIS OF GLU-27 AND CYS-148</scope>
    <scope>CATALYTIC ACTIVITY</scope>
    <scope>IDENTIFICATION BY MASS SPECTROMETRY</scope>
    <scope>FUNCTION</scope>
</reference>
<keyword id="KW-0002">3D-structure</keyword>
<keyword id="KW-0012">Acyltransferase</keyword>
<keyword id="KW-1185">Reference proteome</keyword>
<keyword id="KW-0808">Transferase</keyword>
<organismHost>
    <name type="scientific">Chlorella</name>
    <dbReference type="NCBI Taxonomy" id="3071"/>
</organismHost>
<accession>O41136</accession>
<organism>
    <name type="scientific">Paramecium bursaria Chlorella virus 1</name>
    <name type="common">PBCV-1</name>
    <dbReference type="NCBI Taxonomy" id="10506"/>
    <lineage>
        <taxon>Viruses</taxon>
        <taxon>Varidnaviria</taxon>
        <taxon>Bamfordvirae</taxon>
        <taxon>Nucleocytoviricota</taxon>
        <taxon>Megaviricetes</taxon>
        <taxon>Algavirales</taxon>
        <taxon>Phycodnaviridae</taxon>
        <taxon>Chlorovirus</taxon>
    </lineage>
</organism>
<comment type="function">
    <text evidence="2">Acetylates polyamines such as spermine, spermidine, cadaverine, homospermidine and putrescine (the latter with low efficiency) (PubMed:22277659). May play a role in the regulation of polyamine catabolism in the host during viral replication (PubMed:22277659).</text>
</comment>
<comment type="catalytic activity">
    <reaction evidence="2">
        <text>spermine + acetyl-CoA = N(1)-acetylspermine + CoA + H(+)</text>
        <dbReference type="Rhea" id="RHEA:33099"/>
        <dbReference type="ChEBI" id="CHEBI:15378"/>
        <dbReference type="ChEBI" id="CHEBI:45725"/>
        <dbReference type="ChEBI" id="CHEBI:57287"/>
        <dbReference type="ChEBI" id="CHEBI:57288"/>
        <dbReference type="ChEBI" id="CHEBI:58101"/>
        <dbReference type="EC" id="2.3.1.57"/>
    </reaction>
    <physiologicalReaction direction="left-to-right" evidence="2">
        <dbReference type="Rhea" id="RHEA:33100"/>
    </physiologicalReaction>
</comment>
<comment type="catalytic activity">
    <reaction evidence="2">
        <text>spermidine + acetyl-CoA = N(1)-acetylspermidine + CoA + H(+)</text>
        <dbReference type="Rhea" id="RHEA:28150"/>
        <dbReference type="ChEBI" id="CHEBI:15378"/>
        <dbReference type="ChEBI" id="CHEBI:57287"/>
        <dbReference type="ChEBI" id="CHEBI:57288"/>
        <dbReference type="ChEBI" id="CHEBI:57834"/>
        <dbReference type="ChEBI" id="CHEBI:58324"/>
        <dbReference type="EC" id="2.3.1.57"/>
    </reaction>
    <physiologicalReaction direction="left-to-right" evidence="2">
        <dbReference type="Rhea" id="RHEA:28151"/>
    </physiologicalReaction>
</comment>
<comment type="catalytic activity">
    <reaction evidence="2">
        <text>spermidine + acetyl-CoA = N(8)-acetylspermidine + CoA + H(+)</text>
        <dbReference type="Rhea" id="RHEA:28270"/>
        <dbReference type="ChEBI" id="CHEBI:15378"/>
        <dbReference type="ChEBI" id="CHEBI:57287"/>
        <dbReference type="ChEBI" id="CHEBI:57288"/>
        <dbReference type="ChEBI" id="CHEBI:57834"/>
        <dbReference type="ChEBI" id="CHEBI:58535"/>
        <dbReference type="EC" id="2.3.1.57"/>
    </reaction>
    <physiologicalReaction direction="left-to-right" evidence="2">
        <dbReference type="Rhea" id="RHEA:28271"/>
    </physiologicalReaction>
</comment>
<comment type="catalytic activity">
    <reaction evidence="2">
        <text>putrescine + acetyl-CoA = N-acetylputrescine + CoA + H(+)</text>
        <dbReference type="Rhea" id="RHEA:25181"/>
        <dbReference type="ChEBI" id="CHEBI:15378"/>
        <dbReference type="ChEBI" id="CHEBI:57287"/>
        <dbReference type="ChEBI" id="CHEBI:57288"/>
        <dbReference type="ChEBI" id="CHEBI:58263"/>
        <dbReference type="ChEBI" id="CHEBI:326268"/>
    </reaction>
    <physiologicalReaction direction="left-to-right" evidence="2">
        <dbReference type="Rhea" id="RHEA:25182"/>
    </physiologicalReaction>
</comment>
<comment type="catalytic activity">
    <reaction evidence="2">
        <text>cadaverine + acetyl-CoA = N-acetylcadaverine + CoA + H(+)</text>
        <dbReference type="Rhea" id="RHEA:79547"/>
        <dbReference type="ChEBI" id="CHEBI:15378"/>
        <dbReference type="ChEBI" id="CHEBI:57287"/>
        <dbReference type="ChEBI" id="CHEBI:57288"/>
        <dbReference type="ChEBI" id="CHEBI:58384"/>
        <dbReference type="ChEBI" id="CHEBI:134408"/>
    </reaction>
</comment>
<comment type="catalytic activity">
    <reaction evidence="2">
        <text>sym-homospermidine + acetyl-CoA = N(1)-acetyl-sym-homospermidine + CoA + H(+)</text>
        <dbReference type="Rhea" id="RHEA:79551"/>
        <dbReference type="ChEBI" id="CHEBI:15378"/>
        <dbReference type="ChEBI" id="CHEBI:57287"/>
        <dbReference type="ChEBI" id="CHEBI:57288"/>
        <dbReference type="ChEBI" id="CHEBI:57811"/>
        <dbReference type="ChEBI" id="CHEBI:230463"/>
    </reaction>
</comment>
<comment type="biophysicochemical properties">
    <kinetics>
        <KM evidence="2">21 uM for spermine</KM>
    </kinetics>
</comment>
<comment type="similarity">
    <text evidence="4">Belongs to the acetyltransferase family.</text>
</comment>
<dbReference type="EC" id="2.3.1.57" evidence="2"/>
<dbReference type="EMBL" id="JF411744">
    <property type="protein sequence ID" value="AAC96974.1"/>
    <property type="molecule type" value="Genomic_DNA"/>
</dbReference>
<dbReference type="PIR" id="T18156">
    <property type="entry name" value="T18156"/>
</dbReference>
<dbReference type="RefSeq" id="NP_049010.1">
    <property type="nucleotide sequence ID" value="NC_000852.5"/>
</dbReference>
<dbReference type="PDB" id="3QB8">
    <property type="method" value="X-ray"/>
    <property type="resolution" value="1.50 A"/>
    <property type="chains" value="A/B=1-197"/>
</dbReference>
<dbReference type="PDBsum" id="3QB8"/>
<dbReference type="SMR" id="O41136"/>
<dbReference type="GeneID" id="917939"/>
<dbReference type="KEGG" id="vg:917939"/>
<dbReference type="OrthoDB" id="17031at10239"/>
<dbReference type="EvolutionaryTrace" id="O41136"/>
<dbReference type="Proteomes" id="UP000000862">
    <property type="component" value="Genome"/>
</dbReference>
<dbReference type="GO" id="GO:0008080">
    <property type="term" value="F:N-acetyltransferase activity"/>
    <property type="evidence" value="ECO:0007669"/>
    <property type="project" value="TreeGrafter"/>
</dbReference>
<dbReference type="CDD" id="cd04301">
    <property type="entry name" value="NAT_SF"/>
    <property type="match status" value="1"/>
</dbReference>
<dbReference type="Gene3D" id="3.40.630.30">
    <property type="match status" value="1"/>
</dbReference>
<dbReference type="InterPro" id="IPR016181">
    <property type="entry name" value="Acyl_CoA_acyltransferase"/>
</dbReference>
<dbReference type="InterPro" id="IPR000182">
    <property type="entry name" value="GNAT_dom"/>
</dbReference>
<dbReference type="PANTHER" id="PTHR20905:SF1">
    <property type="entry name" value="AT07410P-RELATED"/>
    <property type="match status" value="1"/>
</dbReference>
<dbReference type="PANTHER" id="PTHR20905">
    <property type="entry name" value="N-ACETYLTRANSFERASE-RELATED"/>
    <property type="match status" value="1"/>
</dbReference>
<dbReference type="Pfam" id="PF00583">
    <property type="entry name" value="Acetyltransf_1"/>
    <property type="match status" value="1"/>
</dbReference>
<dbReference type="SUPFAM" id="SSF55729">
    <property type="entry name" value="Acyl-CoA N-acyltransferases (Nat)"/>
    <property type="match status" value="1"/>
</dbReference>
<dbReference type="PROSITE" id="PS51186">
    <property type="entry name" value="GNAT"/>
    <property type="match status" value="1"/>
</dbReference>
<name>VPAT_PBCV1</name>
<proteinExistence type="evidence at protein level"/>
<feature type="chain" id="PRO_0000460648" description="Viral polyamine acetyltransferase">
    <location>
        <begin position="1"/>
        <end position="197"/>
    </location>
</feature>
<feature type="domain" description="N-acetyltransferase" evidence="1">
    <location>
        <begin position="102"/>
        <end position="182"/>
    </location>
</feature>
<feature type="active site" evidence="2">
    <location>
        <position position="27"/>
    </location>
</feature>
<feature type="binding site" evidence="5 7">
    <location>
        <position position="22"/>
    </location>
    <ligand>
        <name>acetyl-CoA</name>
        <dbReference type="ChEBI" id="CHEBI:57288"/>
    </ligand>
</feature>
<feature type="binding site" evidence="5 7">
    <location>
        <position position="115"/>
    </location>
    <ligand>
        <name>acetyl-CoA</name>
        <dbReference type="ChEBI" id="CHEBI:57288"/>
    </ligand>
</feature>
<feature type="binding site" evidence="5 7">
    <location>
        <position position="117"/>
    </location>
    <ligand>
        <name>acetyl-CoA</name>
        <dbReference type="ChEBI" id="CHEBI:57288"/>
    </ligand>
</feature>
<feature type="binding site" evidence="5 7">
    <location>
        <position position="121"/>
    </location>
    <ligand>
        <name>acetyl-CoA</name>
        <dbReference type="ChEBI" id="CHEBI:57288"/>
    </ligand>
</feature>
<feature type="binding site" evidence="5 7">
    <location>
        <position position="123"/>
    </location>
    <ligand>
        <name>acetyl-CoA</name>
        <dbReference type="ChEBI" id="CHEBI:57288"/>
    </ligand>
</feature>
<feature type="binding site" evidence="5 7">
    <location>
        <position position="125"/>
    </location>
    <ligand>
        <name>acetyl-CoA</name>
        <dbReference type="ChEBI" id="CHEBI:57288"/>
    </ligand>
</feature>
<feature type="binding site" evidence="5 7">
    <location>
        <position position="126"/>
    </location>
    <ligand>
        <name>acetyl-CoA</name>
        <dbReference type="ChEBI" id="CHEBI:57288"/>
    </ligand>
</feature>
<feature type="binding site" evidence="5 7">
    <location>
        <position position="149"/>
    </location>
    <ligand>
        <name>acetyl-CoA</name>
        <dbReference type="ChEBI" id="CHEBI:57288"/>
    </ligand>
</feature>
<feature type="binding site" evidence="5 7">
    <location>
        <position position="150"/>
    </location>
    <ligand>
        <name>acetyl-CoA</name>
        <dbReference type="ChEBI" id="CHEBI:57288"/>
    </ligand>
</feature>
<feature type="binding site" evidence="5 7">
    <location>
        <position position="159"/>
    </location>
    <ligand>
        <name>acetyl-CoA</name>
        <dbReference type="ChEBI" id="CHEBI:57288"/>
    </ligand>
</feature>
<feature type="mutagenesis site" description="26-fold reduction in catalytic constant and 126-fold reduction in catalytic efficiency." evidence="2">
    <original>E</original>
    <variation>Q</variation>
    <location>
        <position position="27"/>
    </location>
</feature>
<feature type="mutagenesis site" description="No effect on catalytic constant." evidence="2">
    <original>C</original>
    <variation>A</variation>
    <location>
        <position position="148"/>
    </location>
</feature>
<feature type="strand" evidence="8">
    <location>
        <begin position="3"/>
        <end position="6"/>
    </location>
</feature>
<feature type="helix" evidence="8">
    <location>
        <begin position="9"/>
        <end position="11"/>
    </location>
</feature>
<feature type="helix" evidence="8">
    <location>
        <begin position="12"/>
        <end position="26"/>
    </location>
</feature>
<feature type="helix" evidence="8">
    <location>
        <begin position="28"/>
        <end position="32"/>
    </location>
</feature>
<feature type="helix" evidence="8">
    <location>
        <begin position="37"/>
        <end position="53"/>
    </location>
</feature>
<feature type="strand" evidence="8">
    <location>
        <begin position="58"/>
        <end position="61"/>
    </location>
</feature>
<feature type="strand" evidence="8">
    <location>
        <begin position="67"/>
        <end position="75"/>
    </location>
</feature>
<feature type="helix" evidence="8">
    <location>
        <begin position="76"/>
        <end position="80"/>
    </location>
</feature>
<feature type="helix" evidence="8">
    <location>
        <begin position="88"/>
        <end position="90"/>
    </location>
</feature>
<feature type="helix" evidence="8">
    <location>
        <begin position="91"/>
        <end position="98"/>
    </location>
</feature>
<feature type="helix" evidence="8">
    <location>
        <begin position="99"/>
        <end position="102"/>
    </location>
</feature>
<feature type="strand" evidence="8">
    <location>
        <begin position="109"/>
        <end position="119"/>
    </location>
</feature>
<feature type="strand" evidence="8">
    <location>
        <begin position="121"/>
        <end position="123"/>
    </location>
</feature>
<feature type="helix" evidence="8">
    <location>
        <begin position="124"/>
        <end position="138"/>
    </location>
</feature>
<feature type="strand" evidence="8">
    <location>
        <begin position="143"/>
        <end position="148"/>
    </location>
</feature>
<feature type="helix" evidence="8">
    <location>
        <begin position="151"/>
        <end position="159"/>
    </location>
</feature>
<feature type="strand" evidence="8">
    <location>
        <begin position="163"/>
        <end position="170"/>
    </location>
</feature>
<feature type="turn" evidence="8">
    <location>
        <begin position="180"/>
        <end position="183"/>
    </location>
</feature>
<feature type="strand" evidence="8">
    <location>
        <begin position="188"/>
        <end position="196"/>
    </location>
</feature>
<protein>
    <recommendedName>
        <fullName evidence="3">Viral polyamine acetyltransferase</fullName>
        <shortName evidence="3">vPAT</shortName>
        <ecNumber evidence="2">2.3.1.57</ecNumber>
    </recommendedName>
</protein>
<evidence type="ECO:0000255" key="1">
    <source>
        <dbReference type="PROSITE-ProRule" id="PRU00532"/>
    </source>
</evidence>
<evidence type="ECO:0000269" key="2">
    <source>
    </source>
</evidence>
<evidence type="ECO:0000303" key="3">
    <source>
    </source>
</evidence>
<evidence type="ECO:0000305" key="4"/>
<evidence type="ECO:0000305" key="5">
    <source>
    </source>
</evidence>
<evidence type="ECO:0000312" key="6">
    <source>
        <dbReference type="EMBL" id="AAC96974.1"/>
    </source>
</evidence>
<evidence type="ECO:0007744" key="7">
    <source>
        <dbReference type="PDB" id="3QB8"/>
    </source>
</evidence>
<evidence type="ECO:0007829" key="8">
    <source>
        <dbReference type="PDB" id="3QB8"/>
    </source>
</evidence>
<sequence length="197" mass="22397">MYTLIKLTSEYTSRAISFTSRNFVASEPTSIALKLTTCDFTTSFQNIMKQCVDYGHSFAFVDADDNIKAQILNIPYDAYENMHYGNIRETDPMFDLFGNLDSYTPDDKCLYVFAIGSEVTGKGLATKLLKKTIEESSSHGFKYIYGDCTNIISQNMFEKHGFETVGSVKYKGYQYGITKPFDSINCTEYIKRMVKTI</sequence>